<comment type="function">
    <text evidence="1">Receptor that may play a role in the perception of bitterness and is gustducin-linked. May play a role in sensing the chemical composition of the gastrointestinal content. The activity of this receptor may stimulate alpha gustducin, mediate PLC-beta-2 activation and lead to the gating of TRPM5 (By similarity).</text>
</comment>
<comment type="subunit">
    <text evidence="2">Interacts with RTP3 and RTP4.</text>
</comment>
<comment type="subcellular location">
    <subcellularLocation>
        <location evidence="2">Cell membrane</location>
        <topology evidence="3">Multi-pass membrane protein</topology>
    </subcellularLocation>
</comment>
<comment type="miscellaneous">
    <text>Most taste cells may be activated by a limited number of bitter compounds; individual taste cells can discriminate among bitter stimuli.</text>
</comment>
<comment type="similarity">
    <text evidence="4">Belongs to the G-protein coupled receptor T2R family.</text>
</comment>
<proteinExistence type="inferred from homology"/>
<accession>Q646D1</accession>
<accession>Q5Y505</accession>
<evidence type="ECO:0000250" key="1"/>
<evidence type="ECO:0000250" key="2">
    <source>
        <dbReference type="UniProtKB" id="Q9NYV7"/>
    </source>
</evidence>
<evidence type="ECO:0000255" key="3"/>
<evidence type="ECO:0000305" key="4"/>
<name>T2R16_PANPA</name>
<sequence length="291" mass="33919">MIPIQLTVFFMIIYVLESLTIIVQSSLIVAVLGREWLQVRRLMPVDMILISLGISRFCLQWASMLNNFCSYFNLNYVLCNLTITWEFFNILTFWLNSLLTVFYCIKASSFTHHIFLWLRWRILRLFPWILLGSLMITCVTIIPSAIGNYIQIQLLTMEHLPRNSTVTDKLEKFHQYQFQAHTVALVIPFILFLASTILLMASLTKQIQHHSTGHCNPSMKAHFTALRSLAVLFIVFTSYFLTILITIIGTLFDKRCWLWVWEAFVYAFILMHSTSLMLSSPTLKRILKGKC</sequence>
<reference key="1">
    <citation type="journal article" date="2005" name="Mol. Biol. Evol.">
        <title>Evolution of bitter taste receptors in humans and apes.</title>
        <authorList>
            <person name="Fischer A."/>
            <person name="Gilad Y."/>
            <person name="Man O."/>
            <person name="Paeaebo S."/>
        </authorList>
    </citation>
    <scope>NUCLEOTIDE SEQUENCE [GENOMIC DNA]</scope>
</reference>
<reference key="2">
    <citation type="journal article" date="2004" name="Proc. Natl. Acad. Sci. U.S.A.">
        <title>Divergence of T2R chemosensory receptor families in humans, bonobos, and chimpanzees.</title>
        <authorList>
            <person name="Parry C.M."/>
            <person name="Erkner A."/>
            <person name="le Coutre J."/>
        </authorList>
    </citation>
    <scope>NUCLEOTIDE SEQUENCE [GENOMIC DNA]</scope>
</reference>
<keyword id="KW-1003">Cell membrane</keyword>
<keyword id="KW-0297">G-protein coupled receptor</keyword>
<keyword id="KW-0325">Glycoprotein</keyword>
<keyword id="KW-0472">Membrane</keyword>
<keyword id="KW-0675">Receptor</keyword>
<keyword id="KW-1185">Reference proteome</keyword>
<keyword id="KW-0716">Sensory transduction</keyword>
<keyword id="KW-0919">Taste</keyword>
<keyword id="KW-0807">Transducer</keyword>
<keyword id="KW-0812">Transmembrane</keyword>
<keyword id="KW-1133">Transmembrane helix</keyword>
<dbReference type="EMBL" id="AY724862">
    <property type="protein sequence ID" value="AAU21088.1"/>
    <property type="molecule type" value="Genomic_DNA"/>
</dbReference>
<dbReference type="EMBL" id="AY677142">
    <property type="protein sequence ID" value="AAV28570.1"/>
    <property type="molecule type" value="Genomic_DNA"/>
</dbReference>
<dbReference type="RefSeq" id="XP_003808674.1">
    <property type="nucleotide sequence ID" value="XM_003808626.2"/>
</dbReference>
<dbReference type="SMR" id="Q646D1"/>
<dbReference type="STRING" id="9597.ENSPPAP00000000163"/>
<dbReference type="GlyCosmos" id="Q646D1">
    <property type="glycosylation" value="2 sites, No reported glycans"/>
</dbReference>
<dbReference type="Ensembl" id="ENSPPAT00000000668.1">
    <property type="protein sequence ID" value="ENSPPAP00000000163.1"/>
    <property type="gene ID" value="ENSPPAG00000000642.1"/>
</dbReference>
<dbReference type="GeneID" id="100980693"/>
<dbReference type="KEGG" id="pps:100980693"/>
<dbReference type="CTD" id="50833"/>
<dbReference type="eggNOG" id="ENOG502S2SI">
    <property type="taxonomic scope" value="Eukaryota"/>
</dbReference>
<dbReference type="GeneTree" id="ENSGT01100000263477"/>
<dbReference type="OMA" id="REWVQVK"/>
<dbReference type="Proteomes" id="UP000240080">
    <property type="component" value="Chromosome 7"/>
</dbReference>
<dbReference type="GO" id="GO:0005783">
    <property type="term" value="C:endoplasmic reticulum"/>
    <property type="evidence" value="ECO:0007669"/>
    <property type="project" value="Ensembl"/>
</dbReference>
<dbReference type="GO" id="GO:0009897">
    <property type="term" value="C:external side of plasma membrane"/>
    <property type="evidence" value="ECO:0007669"/>
    <property type="project" value="Ensembl"/>
</dbReference>
<dbReference type="GO" id="GO:0005802">
    <property type="term" value="C:trans-Golgi network"/>
    <property type="evidence" value="ECO:0007669"/>
    <property type="project" value="Ensembl"/>
</dbReference>
<dbReference type="GO" id="GO:0033038">
    <property type="term" value="F:bitter taste receptor activity"/>
    <property type="evidence" value="ECO:0007669"/>
    <property type="project" value="Ensembl"/>
</dbReference>
<dbReference type="GO" id="GO:0004930">
    <property type="term" value="F:G protein-coupled receptor activity"/>
    <property type="evidence" value="ECO:0007669"/>
    <property type="project" value="UniProtKB-KW"/>
</dbReference>
<dbReference type="CDD" id="cd15017">
    <property type="entry name" value="7tm_TAS2R16"/>
    <property type="match status" value="1"/>
</dbReference>
<dbReference type="FunFam" id="1.20.1070.10:FF:000055">
    <property type="entry name" value="Taste receptor type 2"/>
    <property type="match status" value="1"/>
</dbReference>
<dbReference type="InterPro" id="IPR007960">
    <property type="entry name" value="TAS2R"/>
</dbReference>
<dbReference type="PANTHER" id="PTHR11394">
    <property type="entry name" value="TASTE RECEPTOR TYPE 2"/>
    <property type="match status" value="1"/>
</dbReference>
<dbReference type="PANTHER" id="PTHR11394:SF68">
    <property type="entry name" value="TASTE RECEPTOR TYPE 2 MEMBER 16"/>
    <property type="match status" value="1"/>
</dbReference>
<dbReference type="Pfam" id="PF05296">
    <property type="entry name" value="TAS2R"/>
    <property type="match status" value="1"/>
</dbReference>
<dbReference type="SUPFAM" id="SSF81321">
    <property type="entry name" value="Family A G protein-coupled receptor-like"/>
    <property type="match status" value="1"/>
</dbReference>
<gene>
    <name type="primary">TAS2R16</name>
</gene>
<feature type="chain" id="PRO_0000082263" description="Taste receptor type 2 member 16">
    <location>
        <begin position="1"/>
        <end position="291"/>
    </location>
</feature>
<feature type="topological domain" description="Extracellular" evidence="3">
    <location>
        <position position="1"/>
    </location>
</feature>
<feature type="transmembrane region" description="Helical; Name=1" evidence="3">
    <location>
        <begin position="2"/>
        <end position="22"/>
    </location>
</feature>
<feature type="topological domain" description="Cytoplasmic" evidence="3">
    <location>
        <begin position="23"/>
        <end position="41"/>
    </location>
</feature>
<feature type="transmembrane region" description="Helical; Name=2" evidence="3">
    <location>
        <begin position="42"/>
        <end position="62"/>
    </location>
</feature>
<feature type="topological domain" description="Extracellular" evidence="3">
    <location>
        <begin position="63"/>
        <end position="84"/>
    </location>
</feature>
<feature type="transmembrane region" description="Helical; Name=3" evidence="3">
    <location>
        <begin position="85"/>
        <end position="105"/>
    </location>
</feature>
<feature type="topological domain" description="Cytoplasmic" evidence="3">
    <location>
        <begin position="106"/>
        <end position="125"/>
    </location>
</feature>
<feature type="transmembrane region" description="Helical; Name=4" evidence="3">
    <location>
        <begin position="126"/>
        <end position="146"/>
    </location>
</feature>
<feature type="topological domain" description="Extracellular" evidence="3">
    <location>
        <begin position="147"/>
        <end position="182"/>
    </location>
</feature>
<feature type="transmembrane region" description="Helical; Name=5" evidence="3">
    <location>
        <begin position="183"/>
        <end position="203"/>
    </location>
</feature>
<feature type="topological domain" description="Cytoplasmic" evidence="3">
    <location>
        <begin position="204"/>
        <end position="228"/>
    </location>
</feature>
<feature type="transmembrane region" description="Helical; Name=6" evidence="3">
    <location>
        <begin position="229"/>
        <end position="249"/>
    </location>
</feature>
<feature type="topological domain" description="Extracellular" evidence="3">
    <location>
        <begin position="250"/>
        <end position="257"/>
    </location>
</feature>
<feature type="transmembrane region" description="Helical; Name=7" evidence="3">
    <location>
        <begin position="258"/>
        <end position="278"/>
    </location>
</feature>
<feature type="topological domain" description="Cytoplasmic" evidence="3">
    <location>
        <begin position="279"/>
        <end position="291"/>
    </location>
</feature>
<feature type="glycosylation site" description="N-linked (GlcNAc...) asparagine" evidence="3">
    <location>
        <position position="80"/>
    </location>
</feature>
<feature type="glycosylation site" description="N-linked (GlcNAc...) asparagine" evidence="3">
    <location>
        <position position="163"/>
    </location>
</feature>
<organism>
    <name type="scientific">Pan paniscus</name>
    <name type="common">Pygmy chimpanzee</name>
    <name type="synonym">Bonobo</name>
    <dbReference type="NCBI Taxonomy" id="9597"/>
    <lineage>
        <taxon>Eukaryota</taxon>
        <taxon>Metazoa</taxon>
        <taxon>Chordata</taxon>
        <taxon>Craniata</taxon>
        <taxon>Vertebrata</taxon>
        <taxon>Euteleostomi</taxon>
        <taxon>Mammalia</taxon>
        <taxon>Eutheria</taxon>
        <taxon>Euarchontoglires</taxon>
        <taxon>Primates</taxon>
        <taxon>Haplorrhini</taxon>
        <taxon>Catarrhini</taxon>
        <taxon>Hominidae</taxon>
        <taxon>Pan</taxon>
    </lineage>
</organism>
<protein>
    <recommendedName>
        <fullName>Taste receptor type 2 member 16</fullName>
        <shortName>T2R16</shortName>
    </recommendedName>
</protein>